<feature type="chain" id="PRO_1000191759" description="Protein NrdI">
    <location>
        <begin position="1"/>
        <end position="150"/>
    </location>
</feature>
<dbReference type="EMBL" id="AP010918">
    <property type="protein sequence ID" value="BAH27349.1"/>
    <property type="molecule type" value="Genomic_DNA"/>
</dbReference>
<dbReference type="RefSeq" id="WP_003415981.1">
    <property type="nucleotide sequence ID" value="NZ_CP014566.1"/>
</dbReference>
<dbReference type="SMR" id="C1AGH0"/>
<dbReference type="GeneID" id="45427045"/>
<dbReference type="KEGG" id="mbt:JTY_3071"/>
<dbReference type="HOGENOM" id="CLU_114845_0_0_11"/>
<dbReference type="GO" id="GO:0010181">
    <property type="term" value="F:FMN binding"/>
    <property type="evidence" value="ECO:0007669"/>
    <property type="project" value="InterPro"/>
</dbReference>
<dbReference type="GO" id="GO:0036211">
    <property type="term" value="P:protein modification process"/>
    <property type="evidence" value="ECO:0007669"/>
    <property type="project" value="InterPro"/>
</dbReference>
<dbReference type="FunFam" id="3.40.50.360:FF:000005">
    <property type="entry name" value="Protein NrdI"/>
    <property type="match status" value="1"/>
</dbReference>
<dbReference type="Gene3D" id="3.40.50.360">
    <property type="match status" value="1"/>
</dbReference>
<dbReference type="HAMAP" id="MF_00128">
    <property type="entry name" value="NrdI"/>
    <property type="match status" value="1"/>
</dbReference>
<dbReference type="InterPro" id="IPR029039">
    <property type="entry name" value="Flavoprotein-like_sf"/>
</dbReference>
<dbReference type="InterPro" id="IPR020852">
    <property type="entry name" value="RNR_Ib_NrdI_bac"/>
</dbReference>
<dbReference type="InterPro" id="IPR004465">
    <property type="entry name" value="RNR_NrdI"/>
</dbReference>
<dbReference type="NCBIfam" id="TIGR00333">
    <property type="entry name" value="nrdI"/>
    <property type="match status" value="1"/>
</dbReference>
<dbReference type="PANTHER" id="PTHR37297">
    <property type="entry name" value="PROTEIN NRDI"/>
    <property type="match status" value="1"/>
</dbReference>
<dbReference type="PANTHER" id="PTHR37297:SF1">
    <property type="entry name" value="PROTEIN NRDI"/>
    <property type="match status" value="1"/>
</dbReference>
<dbReference type="Pfam" id="PF07972">
    <property type="entry name" value="Flavodoxin_NdrI"/>
    <property type="match status" value="1"/>
</dbReference>
<dbReference type="PIRSF" id="PIRSF005087">
    <property type="entry name" value="NrdI"/>
    <property type="match status" value="1"/>
</dbReference>
<dbReference type="SUPFAM" id="SSF52218">
    <property type="entry name" value="Flavoproteins"/>
    <property type="match status" value="1"/>
</dbReference>
<organism>
    <name type="scientific">Mycobacterium bovis (strain BCG / Tokyo 172 / ATCC 35737 / TMC 1019)</name>
    <dbReference type="NCBI Taxonomy" id="561275"/>
    <lineage>
        <taxon>Bacteria</taxon>
        <taxon>Bacillati</taxon>
        <taxon>Actinomycetota</taxon>
        <taxon>Actinomycetes</taxon>
        <taxon>Mycobacteriales</taxon>
        <taxon>Mycobacteriaceae</taxon>
        <taxon>Mycobacterium</taxon>
        <taxon>Mycobacterium tuberculosis complex</taxon>
    </lineage>
</organism>
<sequence>MDIAGRSLVYFSSVSENTHRFVQKLGIPATRIPLHGRIEVDEPYVLILPTYGGGRANPGLDAGGYVPKQVIAFLNNDHNRAQLRGVIAAGNTNFGAEFCYAGDVVSRKCSVPYLYRFELMGTEDDVAAVRTGLAEFWKEQTCHQPSLQSL</sequence>
<evidence type="ECO:0000255" key="1">
    <source>
        <dbReference type="HAMAP-Rule" id="MF_00128"/>
    </source>
</evidence>
<comment type="function">
    <text evidence="1">Probably involved in ribonucleotide reductase function.</text>
</comment>
<comment type="similarity">
    <text evidence="1">Belongs to the NrdI family.</text>
</comment>
<reference key="1">
    <citation type="journal article" date="2009" name="Vaccine">
        <title>Whole genome sequence analysis of Mycobacterium bovis bacillus Calmette-Guerin (BCG) Tokyo 172: a comparative study of BCG vaccine substrains.</title>
        <authorList>
            <person name="Seki M."/>
            <person name="Honda I."/>
            <person name="Fujita I."/>
            <person name="Yano I."/>
            <person name="Yamamoto S."/>
            <person name="Koyama A."/>
        </authorList>
    </citation>
    <scope>NUCLEOTIDE SEQUENCE [LARGE SCALE GENOMIC DNA]</scope>
    <source>
        <strain>BCG / Tokyo 172 / ATCC 35737 / TMC 1019</strain>
    </source>
</reference>
<gene>
    <name evidence="1" type="primary">nrdI</name>
    <name type="ordered locus">JTY_3071</name>
</gene>
<proteinExistence type="inferred from homology"/>
<accession>C1AGH0</accession>
<name>NRDI_MYCBT</name>
<protein>
    <recommendedName>
        <fullName evidence="1">Protein NrdI</fullName>
    </recommendedName>
</protein>